<evidence type="ECO:0000269" key="1">
    <source>
    </source>
</evidence>
<evidence type="ECO:0000305" key="2"/>
<evidence type="ECO:0000305" key="3">
    <source>
    </source>
</evidence>
<evidence type="ECO:0000312" key="4">
    <source>
        <dbReference type="EMBL" id="BAW85692.1"/>
    </source>
</evidence>
<reference key="1">
    <citation type="journal article" date="2014" name="Antimicrob. Agents Chemother.">
        <title>Identification of capsular types in carbapenem-resistant Klebsiella pneumoniae strains by wzc sequencing and implications in capsule depolymerase treatment.</title>
        <authorList>
            <person name="Pan Y.-J."/>
            <person name="Lin T.-L."/>
            <person name="Lin Y.-T."/>
            <person name="Su P.-A."/>
            <person name="Chen C.-T."/>
            <person name="Hsieh P.-F."/>
            <person name="Hsu C.-R."/>
            <person name="Chen C.-C."/>
            <person name="Hsieh Y.-C."/>
            <person name="Wang J.-T."/>
        </authorList>
    </citation>
    <scope>NUCLEOTIDE SEQUENCE [LARGE SCALE GENOMIC DNA]</scope>
</reference>
<reference key="2">
    <citation type="journal article" date="2017" name="J. Virol.">
        <title>Klebsiella Phage PhiK64-1 Encodes Multiple Depolymerases for Multiple Host Capsular Types.</title>
        <authorList>
            <person name="Pan Y.-J."/>
            <person name="Lin T.-L."/>
            <person name="Chen C.-C."/>
            <person name="Tsai Y.-T."/>
            <person name="Cheng Y.-H."/>
            <person name="Chen Y.-Y."/>
            <person name="Hsieh P.-F."/>
            <person name="Lin Y.-T."/>
            <person name="Wang J.-T."/>
        </authorList>
    </citation>
    <scope>NUCLEOTIDE SEQUENCE [GENOMIC DNA]</scope>
    <scope>FUNCTION</scope>
</reference>
<reference key="3">
    <citation type="journal article" date="2019" name="Front. Microbiol.">
        <title>Modeling the Architecture of Depolymerase-Containing Receptor Binding Proteins in Klebsiella Phages.</title>
        <authorList>
            <person name="Latka A."/>
            <person name="Leiman P.G."/>
            <person name="Drulis-Kawa Z."/>
            <person name="Briers Y."/>
        </authorList>
    </citation>
    <scope>REVIEW</scope>
</reference>
<dbReference type="EMBL" id="AB897757">
    <property type="protein sequence ID" value="BAQ02835.1"/>
    <property type="molecule type" value="Genomic_DNA"/>
</dbReference>
<dbReference type="EMBL" id="LC121098">
    <property type="protein sequence ID" value="BAW85692.1"/>
    <property type="molecule type" value="Genomic_DNA"/>
</dbReference>
<dbReference type="RefSeq" id="YP_009153195.1">
    <property type="nucleotide sequence ID" value="NC_027399.1"/>
</dbReference>
<dbReference type="SMR" id="A0A0A8JA02"/>
<dbReference type="OrthoDB" id="19240at10239"/>
<dbReference type="Proteomes" id="UP000202478">
    <property type="component" value="Genome"/>
</dbReference>
<dbReference type="GO" id="GO:0098015">
    <property type="term" value="C:virus tail"/>
    <property type="evidence" value="ECO:0007669"/>
    <property type="project" value="UniProtKB-KW"/>
</dbReference>
<dbReference type="GO" id="GO:0098671">
    <property type="term" value="P:adhesion receptor-mediated virion attachment to host cell"/>
    <property type="evidence" value="ECO:0007669"/>
    <property type="project" value="UniProtKB-KW"/>
</dbReference>
<dbReference type="GO" id="GO:0098994">
    <property type="term" value="P:symbiont entry into host cell via disruption of host cell envelope"/>
    <property type="evidence" value="ECO:0007669"/>
    <property type="project" value="UniProtKB-KW"/>
</dbReference>
<dbReference type="GO" id="GO:0098996">
    <property type="term" value="P:symbiont entry into host cell via disruption of host cell glycocalyx"/>
    <property type="evidence" value="ECO:0007669"/>
    <property type="project" value="UniProtKB-KW"/>
</dbReference>
<dbReference type="Gene3D" id="3.30.2020.50">
    <property type="match status" value="1"/>
</dbReference>
<keyword id="KW-1238">Degradation of host capsule during virus entry</keyword>
<keyword id="KW-1235">Degradation of host cell envelope components during virus entry</keyword>
<keyword id="KW-0945">Host-virus interaction</keyword>
<keyword id="KW-1185">Reference proteome</keyword>
<keyword id="KW-1233">Viral attachment to host adhesion receptor</keyword>
<keyword id="KW-1161">Viral attachment to host cell</keyword>
<keyword id="KW-1227">Viral tail protein</keyword>
<keyword id="KW-0946">Virion</keyword>
<keyword id="KW-1160">Virus entry into host cell</keyword>
<protein>
    <recommendedName>
        <fullName evidence="2">Depolymerase, capsule KN4-specific</fullName>
    </recommendedName>
    <alternativeName>
        <fullName evidence="2">Probable tail spike protein</fullName>
    </alternativeName>
</protein>
<organism>
    <name type="scientific">Klebsiella phage K64-1</name>
    <name type="common">Bacteriophage K64-1</name>
    <dbReference type="NCBI Taxonomy" id="1439894"/>
    <lineage>
        <taxon>Viruses</taxon>
        <taxon>Duplodnaviria</taxon>
        <taxon>Heunggongvirae</taxon>
        <taxon>Uroviricota</taxon>
        <taxon>Caudoviricetes</taxon>
        <taxon>Alcyoneusvirus</taxon>
        <taxon>Alcyoneusvirus K641</taxon>
    </lineage>
</organism>
<organismHost>
    <name type="scientific">Klebsiella</name>
    <dbReference type="NCBI Taxonomy" id="570"/>
</organismHost>
<name>DPO12_BPK64</name>
<proteinExistence type="predicted"/>
<feature type="chain" id="PRO_0000458690" description="Depolymerase, capsule KN4-specific">
    <location>
        <begin position="1"/>
        <end position="736"/>
    </location>
</feature>
<gene>
    <name evidence="4" type="primary">S1-2</name>
</gene>
<accession>A0A0A8JA02</accession>
<sequence length="736" mass="81534">MTNSLIQPKGSVSKETNIQSIARITGSKIEEVKYLEDGLDIAGLKFVYDSSTETIWKLNGNETGMVDSWNIVDESTIIIVTNISSYQINILEQIILSNDDAAGKIGTSNGLSVQKNLDNISNNITLDTGGVLKDALKFITPEMFVINNEKYIHGTTLDAVPYLQAAIDYGKTNNLPVVLSQRYPCITFPQTYELPRDDGTVYPGWITAGTDQNIDPEPIYTMRAAIRLYNDSVIIGTNMQTTGIRGNWSKTSGPYDLNGTIGVFISGDSGKDGYVRYHMHDLNISGFMIGRLCEGISAFSTEDNLQISSCGITGIFQGEDAVERGFIKLWYNIAGDVFGGQWLTRNYAYASTYLPPYPASDIYRAGWNDSSFTEKYHYYGDTSLNFTHTAYSSLDNFFNTYFFKTANSITTANGGRLSNNKQTGVWPLGEYKGITGRAKTVYSRYGREILNCNILEAKIMWSPRTPFYHTSQSGSWVGNSKIGNVILERVGIINYAAGNTTGNRFNVDNVDPWDPSQNFFPAMVCRGNIGCMDVTRSGHVQQSVSNEINPIVTGGQIHRQYRRSDDTSSYSMLTLQEFKNSWVSKYVFNSSYAFVQPLVFTSSNAQFKYDYGTFTPVLQIAGSYITLTEATGIYHRFGDIIRIHIRLRNSNLTINTAGPFRISGLPFISSSIQTGYTKGSVFTPQATGVTLIPLVTPSTDVLTILKDSAGTSFSHPAGTFDFSFHADFDYVISFNS</sequence>
<comment type="function">
    <text evidence="1 3">Functions as a receptor binding protein (RBP) and probably mediates the attachment to the host capsular exopolysaccharides (Probable). Displays a depolymerase activity that specifically degrades the KN4-type polysaccharides of Klebsiella pneumoniae capsule (PubMed:28077636).</text>
</comment>
<comment type="subcellular location">
    <subcellularLocation>
        <location evidence="2">Virion</location>
    </subcellularLocation>
    <text evidence="2">Tail appendage.</text>
</comment>